<protein>
    <recommendedName>
        <fullName evidence="1">Penicillin-insensitive murein endopeptidase</fullName>
        <ecNumber evidence="1">3.4.24.-</ecNumber>
    </recommendedName>
    <alternativeName>
        <fullName evidence="1">D-alanyl-D-alanine-endopeptidase</fullName>
        <shortName evidence="1">DD-endopeptidase</shortName>
    </alternativeName>
</protein>
<keyword id="KW-1015">Disulfide bond</keyword>
<keyword id="KW-0378">Hydrolase</keyword>
<keyword id="KW-0479">Metal-binding</keyword>
<keyword id="KW-0482">Metalloprotease</keyword>
<keyword id="KW-0574">Periplasm</keyword>
<keyword id="KW-0645">Protease</keyword>
<keyword id="KW-1185">Reference proteome</keyword>
<keyword id="KW-0732">Signal</keyword>
<keyword id="KW-0862">Zinc</keyword>
<accession>A8ADQ0</accession>
<proteinExistence type="inferred from homology"/>
<sequence length="274" mass="30149">MKKTALALLALLVSSASLAATPWQKITHPVPGSAQSIGGFSNGCIVGADTLPVQSEHYQVMRTDQRRYFGHPDLVMFIQRLSTQVSNLGFGTVLIGDMGMPAGGRFNGGHASHQTGLDVDIFLQLPKTRWTQAQLLRPQAIDLVSRDGKHVVPSLWKPEISSLIKLAAEDNDVTRIFVNPAIKQQLCLDAGTDRDWLRKVRPWFQHRAHMHVRLRCPADSLECEDQPLPPPGDGCGAELQSWFEPPEPGTTKPEKKTPPPLPPSCQALLDEHVL</sequence>
<organism>
    <name type="scientific">Citrobacter koseri (strain ATCC BAA-895 / CDC 4225-83 / SGSC4696)</name>
    <dbReference type="NCBI Taxonomy" id="290338"/>
    <lineage>
        <taxon>Bacteria</taxon>
        <taxon>Pseudomonadati</taxon>
        <taxon>Pseudomonadota</taxon>
        <taxon>Gammaproteobacteria</taxon>
        <taxon>Enterobacterales</taxon>
        <taxon>Enterobacteriaceae</taxon>
        <taxon>Citrobacter</taxon>
    </lineage>
</organism>
<reference key="1">
    <citation type="submission" date="2007-08" db="EMBL/GenBank/DDBJ databases">
        <authorList>
            <consortium name="The Citrobacter koseri Genome Sequencing Project"/>
            <person name="McClelland M."/>
            <person name="Sanderson E.K."/>
            <person name="Porwollik S."/>
            <person name="Spieth J."/>
            <person name="Clifton W.S."/>
            <person name="Latreille P."/>
            <person name="Courtney L."/>
            <person name="Wang C."/>
            <person name="Pepin K."/>
            <person name="Bhonagiri V."/>
            <person name="Nash W."/>
            <person name="Johnson M."/>
            <person name="Thiruvilangam P."/>
            <person name="Wilson R."/>
        </authorList>
    </citation>
    <scope>NUCLEOTIDE SEQUENCE [LARGE SCALE GENOMIC DNA]</scope>
    <source>
        <strain>ATCC BAA-895 / CDC 4225-83 / SGSC4696</strain>
    </source>
</reference>
<dbReference type="EC" id="3.4.24.-" evidence="1"/>
<dbReference type="EMBL" id="CP000822">
    <property type="protein sequence ID" value="ABV11613.1"/>
    <property type="molecule type" value="Genomic_DNA"/>
</dbReference>
<dbReference type="RefSeq" id="WP_012131440.1">
    <property type="nucleotide sequence ID" value="NC_009792.1"/>
</dbReference>
<dbReference type="SMR" id="A8ADQ0"/>
<dbReference type="STRING" id="290338.CKO_00457"/>
<dbReference type="MEROPS" id="M74.001"/>
<dbReference type="GeneID" id="45134704"/>
<dbReference type="KEGG" id="cko:CKO_00457"/>
<dbReference type="HOGENOM" id="CLU_052496_0_0_6"/>
<dbReference type="OrthoDB" id="1467367at2"/>
<dbReference type="Proteomes" id="UP000008148">
    <property type="component" value="Chromosome"/>
</dbReference>
<dbReference type="GO" id="GO:0030288">
    <property type="term" value="C:outer membrane-bounded periplasmic space"/>
    <property type="evidence" value="ECO:0007669"/>
    <property type="project" value="InterPro"/>
</dbReference>
<dbReference type="GO" id="GO:0046872">
    <property type="term" value="F:metal ion binding"/>
    <property type="evidence" value="ECO:0007669"/>
    <property type="project" value="UniProtKB-KW"/>
</dbReference>
<dbReference type="GO" id="GO:0004222">
    <property type="term" value="F:metalloendopeptidase activity"/>
    <property type="evidence" value="ECO:0007669"/>
    <property type="project" value="UniProtKB-UniRule"/>
</dbReference>
<dbReference type="GO" id="GO:0004252">
    <property type="term" value="F:serine-type endopeptidase activity"/>
    <property type="evidence" value="ECO:0007669"/>
    <property type="project" value="InterPro"/>
</dbReference>
<dbReference type="GO" id="GO:0000270">
    <property type="term" value="P:peptidoglycan metabolic process"/>
    <property type="evidence" value="ECO:0007669"/>
    <property type="project" value="UniProtKB-UniRule"/>
</dbReference>
<dbReference type="GO" id="GO:0006508">
    <property type="term" value="P:proteolysis"/>
    <property type="evidence" value="ECO:0007669"/>
    <property type="project" value="UniProtKB-KW"/>
</dbReference>
<dbReference type="FunFam" id="3.30.1380.10:FF:000002">
    <property type="entry name" value="Penicillin-insensitive murein endopeptidase"/>
    <property type="match status" value="1"/>
</dbReference>
<dbReference type="Gene3D" id="3.30.1380.10">
    <property type="match status" value="1"/>
</dbReference>
<dbReference type="HAMAP" id="MF_01623">
    <property type="entry name" value="MepA"/>
    <property type="match status" value="1"/>
</dbReference>
<dbReference type="InterPro" id="IPR009045">
    <property type="entry name" value="Hedgehog_sig/DD-Pept_Zn-bd_sf"/>
</dbReference>
<dbReference type="InterPro" id="IPR005073">
    <property type="entry name" value="Peptidase_M74"/>
</dbReference>
<dbReference type="NCBIfam" id="NF006947">
    <property type="entry name" value="PRK09429.1"/>
    <property type="match status" value="1"/>
</dbReference>
<dbReference type="Pfam" id="PF03411">
    <property type="entry name" value="Peptidase_M74"/>
    <property type="match status" value="1"/>
</dbReference>
<dbReference type="PIRSF" id="PIRSF018455">
    <property type="entry name" value="MepA"/>
    <property type="match status" value="1"/>
</dbReference>
<dbReference type="SUPFAM" id="SSF55166">
    <property type="entry name" value="Hedgehog/DD-peptidase"/>
    <property type="match status" value="1"/>
</dbReference>
<name>MEPA_CITK8</name>
<feature type="signal peptide" evidence="1">
    <location>
        <begin position="1"/>
        <end position="19"/>
    </location>
</feature>
<feature type="chain" id="PRO_1000069595" description="Penicillin-insensitive murein endopeptidase">
    <location>
        <begin position="20"/>
        <end position="274"/>
    </location>
</feature>
<feature type="region of interest" description="Disordered" evidence="2">
    <location>
        <begin position="225"/>
        <end position="274"/>
    </location>
</feature>
<feature type="binding site" evidence="1">
    <location>
        <position position="110"/>
    </location>
    <ligand>
        <name>Zn(2+)</name>
        <dbReference type="ChEBI" id="CHEBI:29105"/>
        <label>1</label>
    </ligand>
</feature>
<feature type="binding site" evidence="1">
    <location>
        <position position="113"/>
    </location>
    <ligand>
        <name>Zn(2+)</name>
        <dbReference type="ChEBI" id="CHEBI:29105"/>
        <label>1</label>
    </ligand>
</feature>
<feature type="binding site" evidence="1">
    <location>
        <position position="120"/>
    </location>
    <ligand>
        <name>Zn(2+)</name>
        <dbReference type="ChEBI" id="CHEBI:29105"/>
        <label>1</label>
    </ligand>
</feature>
<feature type="binding site" evidence="1">
    <location>
        <position position="147"/>
    </location>
    <ligand>
        <name>Zn(2+)</name>
        <dbReference type="ChEBI" id="CHEBI:29105"/>
        <label>2</label>
    </ligand>
</feature>
<feature type="binding site" evidence="1">
    <location>
        <position position="150"/>
    </location>
    <ligand>
        <name>Zn(2+)</name>
        <dbReference type="ChEBI" id="CHEBI:29105"/>
        <label>2</label>
    </ligand>
</feature>
<feature type="binding site" evidence="1">
    <location>
        <position position="211"/>
    </location>
    <ligand>
        <name>Zn(2+)</name>
        <dbReference type="ChEBI" id="CHEBI:29105"/>
        <label>1</label>
    </ligand>
</feature>
<feature type="disulfide bond" evidence="1">
    <location>
        <begin position="44"/>
        <end position="265"/>
    </location>
</feature>
<feature type="disulfide bond" evidence="1">
    <location>
        <begin position="187"/>
        <end position="235"/>
    </location>
</feature>
<feature type="disulfide bond" evidence="1">
    <location>
        <begin position="216"/>
        <end position="223"/>
    </location>
</feature>
<gene>
    <name evidence="1" type="primary">mepA</name>
    <name type="ordered locus">CKO_00457</name>
</gene>
<comment type="function">
    <text evidence="1">Murein endopeptidase that cleaves the D-alanyl-meso-2,6-diamino-pimelyl amide bond that connects peptidoglycan strands. Likely plays a role in the removal of murein from the sacculus.</text>
</comment>
<comment type="cofactor">
    <cofactor evidence="1">
        <name>Zn(2+)</name>
        <dbReference type="ChEBI" id="CHEBI:29105"/>
    </cofactor>
    <text evidence="1">Binds 2 Zn(2+) ions per subunit. Zn(2+) ion 1 is bound in the active site. Zn(2+) ion 2 is bound at the dimer interface by residues from both subunits.</text>
</comment>
<comment type="subunit">
    <text evidence="1">Dimer.</text>
</comment>
<comment type="subcellular location">
    <subcellularLocation>
        <location evidence="1">Periplasm</location>
    </subcellularLocation>
</comment>
<comment type="similarity">
    <text evidence="1">Belongs to the peptidase M74 family.</text>
</comment>
<evidence type="ECO:0000255" key="1">
    <source>
        <dbReference type="HAMAP-Rule" id="MF_01623"/>
    </source>
</evidence>
<evidence type="ECO:0000256" key="2">
    <source>
        <dbReference type="SAM" id="MobiDB-lite"/>
    </source>
</evidence>